<name>EFP_SHEWM</name>
<protein>
    <recommendedName>
        <fullName evidence="1">Elongation factor P</fullName>
        <shortName evidence="1">EF-P</shortName>
    </recommendedName>
</protein>
<sequence length="186" mass="20569">MKTAHEIRPGNVIMLDGSPWVVQKTETTRSGRNAAIVKMKLKNVLLDSSTETTFKGEDKMDDIILERLDCTYSYFADPMYVFMDAEYNQYDVEAGNLGDASAYIVDGMEEVCQVTFYEGKAISVELPTTIVREVTYTEPSARGDTSGKVMKPATVSGGATLSVADFVKTGDMIEIDTRTGEFKKRV</sequence>
<comment type="function">
    <text evidence="1">Involved in peptide bond synthesis. Stimulates efficient translation and peptide-bond synthesis on native or reconstituted 70S ribosomes in vitro. Probably functions indirectly by altering the affinity of the ribosome for aminoacyl-tRNA, thus increasing their reactivity as acceptors for peptidyl transferase.</text>
</comment>
<comment type="pathway">
    <text evidence="1">Protein biosynthesis; polypeptide chain elongation.</text>
</comment>
<comment type="subcellular location">
    <subcellularLocation>
        <location evidence="1">Cytoplasm</location>
    </subcellularLocation>
</comment>
<comment type="similarity">
    <text evidence="1">Belongs to the elongation factor P family.</text>
</comment>
<organism>
    <name type="scientific">Shewanella woodyi (strain ATCC 51908 / MS32)</name>
    <dbReference type="NCBI Taxonomy" id="392500"/>
    <lineage>
        <taxon>Bacteria</taxon>
        <taxon>Pseudomonadati</taxon>
        <taxon>Pseudomonadota</taxon>
        <taxon>Gammaproteobacteria</taxon>
        <taxon>Alteromonadales</taxon>
        <taxon>Shewanellaceae</taxon>
        <taxon>Shewanella</taxon>
    </lineage>
</organism>
<dbReference type="EMBL" id="CP000961">
    <property type="protein sequence ID" value="ACA86549.1"/>
    <property type="molecule type" value="Genomic_DNA"/>
</dbReference>
<dbReference type="RefSeq" id="WP_012324892.1">
    <property type="nucleotide sequence ID" value="NC_010506.1"/>
</dbReference>
<dbReference type="SMR" id="B1KEH1"/>
<dbReference type="STRING" id="392500.Swoo_2268"/>
<dbReference type="KEGG" id="swd:Swoo_2268"/>
<dbReference type="eggNOG" id="COG0231">
    <property type="taxonomic scope" value="Bacteria"/>
</dbReference>
<dbReference type="HOGENOM" id="CLU_074944_2_1_6"/>
<dbReference type="UniPathway" id="UPA00345"/>
<dbReference type="Proteomes" id="UP000002168">
    <property type="component" value="Chromosome"/>
</dbReference>
<dbReference type="GO" id="GO:0005737">
    <property type="term" value="C:cytoplasm"/>
    <property type="evidence" value="ECO:0007669"/>
    <property type="project" value="UniProtKB-SubCell"/>
</dbReference>
<dbReference type="GO" id="GO:0003746">
    <property type="term" value="F:translation elongation factor activity"/>
    <property type="evidence" value="ECO:0007669"/>
    <property type="project" value="UniProtKB-UniRule"/>
</dbReference>
<dbReference type="GO" id="GO:0043043">
    <property type="term" value="P:peptide biosynthetic process"/>
    <property type="evidence" value="ECO:0007669"/>
    <property type="project" value="InterPro"/>
</dbReference>
<dbReference type="CDD" id="cd04470">
    <property type="entry name" value="S1_EF-P_repeat_1"/>
    <property type="match status" value="1"/>
</dbReference>
<dbReference type="CDD" id="cd05794">
    <property type="entry name" value="S1_EF-P_repeat_2"/>
    <property type="match status" value="1"/>
</dbReference>
<dbReference type="FunFam" id="2.30.30.30:FF:000003">
    <property type="entry name" value="Elongation factor P"/>
    <property type="match status" value="1"/>
</dbReference>
<dbReference type="FunFam" id="2.40.50.140:FF:000004">
    <property type="entry name" value="Elongation factor P"/>
    <property type="match status" value="1"/>
</dbReference>
<dbReference type="FunFam" id="2.40.50.140:FF:000009">
    <property type="entry name" value="Elongation factor P"/>
    <property type="match status" value="1"/>
</dbReference>
<dbReference type="Gene3D" id="2.30.30.30">
    <property type="match status" value="1"/>
</dbReference>
<dbReference type="Gene3D" id="2.40.50.140">
    <property type="entry name" value="Nucleic acid-binding proteins"/>
    <property type="match status" value="2"/>
</dbReference>
<dbReference type="HAMAP" id="MF_00141">
    <property type="entry name" value="EF_P"/>
    <property type="match status" value="1"/>
</dbReference>
<dbReference type="InterPro" id="IPR015365">
    <property type="entry name" value="Elong-fact-P_C"/>
</dbReference>
<dbReference type="InterPro" id="IPR012340">
    <property type="entry name" value="NA-bd_OB-fold"/>
</dbReference>
<dbReference type="InterPro" id="IPR014722">
    <property type="entry name" value="Rib_uL2_dom2"/>
</dbReference>
<dbReference type="InterPro" id="IPR020599">
    <property type="entry name" value="Transl_elong_fac_P/YeiP"/>
</dbReference>
<dbReference type="InterPro" id="IPR013185">
    <property type="entry name" value="Transl_elong_KOW-like"/>
</dbReference>
<dbReference type="InterPro" id="IPR001059">
    <property type="entry name" value="Transl_elong_P/YeiP_cen"/>
</dbReference>
<dbReference type="InterPro" id="IPR011768">
    <property type="entry name" value="Transl_elongation_fac_P"/>
</dbReference>
<dbReference type="InterPro" id="IPR008991">
    <property type="entry name" value="Translation_prot_SH3-like_sf"/>
</dbReference>
<dbReference type="NCBIfam" id="TIGR00038">
    <property type="entry name" value="efp"/>
    <property type="match status" value="1"/>
</dbReference>
<dbReference type="NCBIfam" id="NF001810">
    <property type="entry name" value="PRK00529.1"/>
    <property type="match status" value="1"/>
</dbReference>
<dbReference type="PANTHER" id="PTHR30053">
    <property type="entry name" value="ELONGATION FACTOR P"/>
    <property type="match status" value="1"/>
</dbReference>
<dbReference type="PANTHER" id="PTHR30053:SF12">
    <property type="entry name" value="ELONGATION FACTOR P (EF-P) FAMILY PROTEIN"/>
    <property type="match status" value="1"/>
</dbReference>
<dbReference type="Pfam" id="PF01132">
    <property type="entry name" value="EFP"/>
    <property type="match status" value="1"/>
</dbReference>
<dbReference type="Pfam" id="PF08207">
    <property type="entry name" value="EFP_N"/>
    <property type="match status" value="1"/>
</dbReference>
<dbReference type="Pfam" id="PF09285">
    <property type="entry name" value="Elong-fact-P_C"/>
    <property type="match status" value="1"/>
</dbReference>
<dbReference type="PIRSF" id="PIRSF005901">
    <property type="entry name" value="EF-P"/>
    <property type="match status" value="1"/>
</dbReference>
<dbReference type="SMART" id="SM01185">
    <property type="entry name" value="EFP"/>
    <property type="match status" value="1"/>
</dbReference>
<dbReference type="SMART" id="SM00841">
    <property type="entry name" value="Elong-fact-P_C"/>
    <property type="match status" value="1"/>
</dbReference>
<dbReference type="SUPFAM" id="SSF50249">
    <property type="entry name" value="Nucleic acid-binding proteins"/>
    <property type="match status" value="2"/>
</dbReference>
<dbReference type="SUPFAM" id="SSF50104">
    <property type="entry name" value="Translation proteins SH3-like domain"/>
    <property type="match status" value="1"/>
</dbReference>
<evidence type="ECO:0000255" key="1">
    <source>
        <dbReference type="HAMAP-Rule" id="MF_00141"/>
    </source>
</evidence>
<proteinExistence type="inferred from homology"/>
<reference key="1">
    <citation type="submission" date="2008-02" db="EMBL/GenBank/DDBJ databases">
        <title>Complete sequence of Shewanella woodyi ATCC 51908.</title>
        <authorList>
            <consortium name="US DOE Joint Genome Institute"/>
            <person name="Copeland A."/>
            <person name="Lucas S."/>
            <person name="Lapidus A."/>
            <person name="Glavina del Rio T."/>
            <person name="Dalin E."/>
            <person name="Tice H."/>
            <person name="Bruce D."/>
            <person name="Goodwin L."/>
            <person name="Pitluck S."/>
            <person name="Sims D."/>
            <person name="Brettin T."/>
            <person name="Detter J.C."/>
            <person name="Han C."/>
            <person name="Kuske C.R."/>
            <person name="Schmutz J."/>
            <person name="Larimer F."/>
            <person name="Land M."/>
            <person name="Hauser L."/>
            <person name="Kyrpides N."/>
            <person name="Lykidis A."/>
            <person name="Zhao J.-S."/>
            <person name="Richardson P."/>
        </authorList>
    </citation>
    <scope>NUCLEOTIDE SEQUENCE [LARGE SCALE GENOMIC DNA]</scope>
    <source>
        <strain>ATCC 51908 / MS32</strain>
    </source>
</reference>
<accession>B1KEH1</accession>
<keyword id="KW-0963">Cytoplasm</keyword>
<keyword id="KW-0251">Elongation factor</keyword>
<keyword id="KW-0648">Protein biosynthesis</keyword>
<keyword id="KW-1185">Reference proteome</keyword>
<feature type="chain" id="PRO_1000096205" description="Elongation factor P">
    <location>
        <begin position="1"/>
        <end position="186"/>
    </location>
</feature>
<gene>
    <name evidence="1" type="primary">efp</name>
    <name type="ordered locus">Swoo_2268</name>
</gene>